<accession>Q3U276</accession>
<accession>B2RVF8</accession>
<name>SDHF1_MOUSE</name>
<organism>
    <name type="scientific">Mus musculus</name>
    <name type="common">Mouse</name>
    <dbReference type="NCBI Taxonomy" id="10090"/>
    <lineage>
        <taxon>Eukaryota</taxon>
        <taxon>Metazoa</taxon>
        <taxon>Chordata</taxon>
        <taxon>Craniata</taxon>
        <taxon>Vertebrata</taxon>
        <taxon>Euteleostomi</taxon>
        <taxon>Mammalia</taxon>
        <taxon>Eutheria</taxon>
        <taxon>Euarchontoglires</taxon>
        <taxon>Glires</taxon>
        <taxon>Rodentia</taxon>
        <taxon>Myomorpha</taxon>
        <taxon>Muroidea</taxon>
        <taxon>Muridae</taxon>
        <taxon>Murinae</taxon>
        <taxon>Mus</taxon>
        <taxon>Mus</taxon>
    </lineage>
</organism>
<gene>
    <name evidence="1" type="primary">Sdhaf1</name>
    <name evidence="1" type="synonym">Lyrm8</name>
</gene>
<comment type="function">
    <text evidence="1">Plays an essential role in the assembly of succinate dehydrogenase (SDH), an enzyme complex (also referred to as respiratory complex II) that is a component of both the tricarboxylic acid (TCA) cycle and the mitochondrial electron transport chain, and which couples the oxidation of succinate to fumarate with the reduction of ubiquinone (coenzyme Q) to ubiquinol. Promotes maturation of the iron-sulfur protein subunit Sdhb of the SDH catalytic dimer, protecting it from the deleterious effects of oxidants. May act together with SDHAF3. Contributes to iron-sulfur cluster incorporation into SDHB by binding to SDHB and recruiting the iron-sulfur transfer complex formed by HSC20, HSPA9 and ISCU through direct binding to HSC20.</text>
</comment>
<comment type="subunit">
    <text evidence="2">Interacts with SDHB within an SDHA-SDHB subcomplex. Also interacts with the iron-sulfur transfer complex formed by HSC20, HSPA9 and ISCU through direct binding to HSC20. Binding of SDHAF1 to SDHB precedes and is necessary for recruitment of the iron-sulfur transfer complex by SDHAF1.</text>
</comment>
<comment type="subcellular location">
    <subcellularLocation>
        <location evidence="1">Mitochondrion matrix</location>
    </subcellularLocation>
</comment>
<comment type="similarity">
    <text evidence="4">Belongs to the complex I LYR family. SDHAF1 subfamily.</text>
</comment>
<dbReference type="EMBL" id="AK155437">
    <property type="protein sequence ID" value="BAE33266.1"/>
    <property type="molecule type" value="mRNA"/>
</dbReference>
<dbReference type="EMBL" id="BC147173">
    <property type="protein sequence ID" value="AAI47174.1"/>
    <property type="molecule type" value="mRNA"/>
</dbReference>
<dbReference type="EMBL" id="BC147174">
    <property type="protein sequence ID" value="AAI47175.1"/>
    <property type="molecule type" value="mRNA"/>
</dbReference>
<dbReference type="CCDS" id="CCDS39881.1"/>
<dbReference type="RefSeq" id="NP_001028312.2">
    <property type="nucleotide sequence ID" value="NM_001033140.3"/>
</dbReference>
<dbReference type="SMR" id="Q3U276"/>
<dbReference type="FunCoup" id="Q3U276">
    <property type="interactions" value="470"/>
</dbReference>
<dbReference type="STRING" id="10090.ENSMUSP00000096185"/>
<dbReference type="GlyGen" id="Q3U276">
    <property type="glycosylation" value="1 site, 1 O-linked glycan (1 site)"/>
</dbReference>
<dbReference type="PhosphoSitePlus" id="Q3U276"/>
<dbReference type="SwissPalm" id="Q3U276"/>
<dbReference type="PaxDb" id="10090-ENSMUSP00000096185"/>
<dbReference type="PeptideAtlas" id="Q3U276"/>
<dbReference type="ProteomicsDB" id="253432"/>
<dbReference type="Pumba" id="Q3U276"/>
<dbReference type="Antibodypedia" id="44606">
    <property type="antibodies" value="199 antibodies from 26 providers"/>
</dbReference>
<dbReference type="Ensembl" id="ENSMUST00000098586.5">
    <property type="protein sequence ID" value="ENSMUSP00000096185.4"/>
    <property type="gene ID" value="ENSMUSG00000074211.5"/>
</dbReference>
<dbReference type="GeneID" id="68332"/>
<dbReference type="KEGG" id="mmu:68332"/>
<dbReference type="UCSC" id="uc009ged.1">
    <property type="organism name" value="mouse"/>
</dbReference>
<dbReference type="AGR" id="MGI:1915582"/>
<dbReference type="CTD" id="644096"/>
<dbReference type="MGI" id="MGI:1915582">
    <property type="gene designation" value="Sdhaf1"/>
</dbReference>
<dbReference type="VEuPathDB" id="HostDB:ENSMUSG00000074211"/>
<dbReference type="eggNOG" id="KOG4620">
    <property type="taxonomic scope" value="Eukaryota"/>
</dbReference>
<dbReference type="GeneTree" id="ENSGT00940000157289"/>
<dbReference type="HOGENOM" id="CLU_154777_0_1_1"/>
<dbReference type="InParanoid" id="Q3U276"/>
<dbReference type="OMA" id="MGTFVRP"/>
<dbReference type="OrthoDB" id="273010at2759"/>
<dbReference type="PhylomeDB" id="Q3U276"/>
<dbReference type="TreeFam" id="TF344152"/>
<dbReference type="Reactome" id="R-MMU-9854311">
    <property type="pathway name" value="Maturation of TCA enzymes and regulation of TCA cycle"/>
</dbReference>
<dbReference type="BioGRID-ORCS" id="68332">
    <property type="hits" value="2 hits in 43 CRISPR screens"/>
</dbReference>
<dbReference type="PRO" id="PR:Q3U276"/>
<dbReference type="Proteomes" id="UP000000589">
    <property type="component" value="Chromosome 7"/>
</dbReference>
<dbReference type="RNAct" id="Q3U276">
    <property type="molecule type" value="protein"/>
</dbReference>
<dbReference type="Bgee" id="ENSMUSG00000074211">
    <property type="expression patterns" value="Expressed in ileal epithelium and 237 other cell types or tissues"/>
</dbReference>
<dbReference type="GO" id="GO:0005759">
    <property type="term" value="C:mitochondrial matrix"/>
    <property type="evidence" value="ECO:0007669"/>
    <property type="project" value="UniProtKB-SubCell"/>
</dbReference>
<dbReference type="GO" id="GO:0005739">
    <property type="term" value="C:mitochondrion"/>
    <property type="evidence" value="ECO:0007005"/>
    <property type="project" value="MGI"/>
</dbReference>
<dbReference type="GO" id="GO:0005654">
    <property type="term" value="C:nucleoplasm"/>
    <property type="evidence" value="ECO:0007669"/>
    <property type="project" value="Ensembl"/>
</dbReference>
<dbReference type="GO" id="GO:0034553">
    <property type="term" value="P:mitochondrial respiratory chain complex II assembly"/>
    <property type="evidence" value="ECO:0000250"/>
    <property type="project" value="UniProtKB"/>
</dbReference>
<dbReference type="CDD" id="cd20268">
    <property type="entry name" value="Complex1_LYR_SDHAF1_LYRM8"/>
    <property type="match status" value="1"/>
</dbReference>
<dbReference type="InterPro" id="IPR008011">
    <property type="entry name" value="Complex1_LYR_dom"/>
</dbReference>
<dbReference type="InterPro" id="IPR045295">
    <property type="entry name" value="Complex1_LYR_SDHAF1_LYRM8"/>
</dbReference>
<dbReference type="InterPro" id="IPR052687">
    <property type="entry name" value="SDHAF1"/>
</dbReference>
<dbReference type="PANTHER" id="PTHR47046">
    <property type="entry name" value="SUCCINATE DEHYDROGENASE ASSEMBLY FACTOR 1, MITOCHONDRIAL"/>
    <property type="match status" value="1"/>
</dbReference>
<dbReference type="PANTHER" id="PTHR47046:SF1">
    <property type="entry name" value="SUCCINATE DEHYDROGENASE ASSEMBLY FACTOR 1, MITOCHONDRIAL"/>
    <property type="match status" value="1"/>
</dbReference>
<dbReference type="Pfam" id="PF05347">
    <property type="entry name" value="Complex1_LYR"/>
    <property type="match status" value="1"/>
</dbReference>
<protein>
    <recommendedName>
        <fullName evidence="1">Succinate dehydrogenase assembly factor 1, mitochondrial</fullName>
        <shortName evidence="1">SDH assembly factor 1</shortName>
        <shortName evidence="1">SDHAF1</shortName>
    </recommendedName>
    <alternativeName>
        <fullName evidence="1">LYR motif-containing protein 8</fullName>
    </alternativeName>
</protein>
<proteinExistence type="evidence at protein level"/>
<keyword id="KW-0143">Chaperone</keyword>
<keyword id="KW-0496">Mitochondrion</keyword>
<keyword id="KW-1185">Reference proteome</keyword>
<keyword id="KW-0677">Repeat</keyword>
<evidence type="ECO:0000250" key="1">
    <source>
        <dbReference type="UniProtKB" id="A6NFY7"/>
    </source>
</evidence>
<evidence type="ECO:0000250" key="2">
    <source>
        <dbReference type="UniProtKB" id="Q3E785"/>
    </source>
</evidence>
<evidence type="ECO:0000256" key="3">
    <source>
        <dbReference type="SAM" id="MobiDB-lite"/>
    </source>
</evidence>
<evidence type="ECO:0000305" key="4"/>
<sequence>MSRPSRLQRQVLSLYRELLRAGRGTPGAEARVRAEFRQHASLPRTDVLRIEYLYRRGRRQLQLLRSGHATAMGTFVRPRGPAEEPGDATAPGTRLDDGGAPKNSCEDTGARETRSDGR</sequence>
<feature type="chain" id="PRO_0000327917" description="Succinate dehydrogenase assembly factor 1, mitochondrial">
    <location>
        <begin position="1"/>
        <end position="118"/>
    </location>
</feature>
<feature type="region of interest" description="Interaction with SDHB" evidence="1">
    <location>
        <begin position="53"/>
        <end position="65"/>
    </location>
</feature>
<feature type="region of interest" description="Disordered" evidence="3">
    <location>
        <begin position="68"/>
        <end position="118"/>
    </location>
</feature>
<feature type="short sequence motif" description="LYR motif 1; required for interaction with HSC20" evidence="1">
    <location>
        <begin position="14"/>
        <end position="16"/>
    </location>
</feature>
<feature type="short sequence motif" description="LYR motif 2; not required for interaction with HSC20" evidence="1">
    <location>
        <begin position="53"/>
        <end position="55"/>
    </location>
</feature>
<feature type="compositionally biased region" description="Basic and acidic residues" evidence="3">
    <location>
        <begin position="94"/>
        <end position="118"/>
    </location>
</feature>
<reference key="1">
    <citation type="journal article" date="2005" name="Science">
        <title>The transcriptional landscape of the mammalian genome.</title>
        <authorList>
            <person name="Carninci P."/>
            <person name="Kasukawa T."/>
            <person name="Katayama S."/>
            <person name="Gough J."/>
            <person name="Frith M.C."/>
            <person name="Maeda N."/>
            <person name="Oyama R."/>
            <person name="Ravasi T."/>
            <person name="Lenhard B."/>
            <person name="Wells C."/>
            <person name="Kodzius R."/>
            <person name="Shimokawa K."/>
            <person name="Bajic V.B."/>
            <person name="Brenner S.E."/>
            <person name="Batalov S."/>
            <person name="Forrest A.R."/>
            <person name="Zavolan M."/>
            <person name="Davis M.J."/>
            <person name="Wilming L.G."/>
            <person name="Aidinis V."/>
            <person name="Allen J.E."/>
            <person name="Ambesi-Impiombato A."/>
            <person name="Apweiler R."/>
            <person name="Aturaliya R.N."/>
            <person name="Bailey T.L."/>
            <person name="Bansal M."/>
            <person name="Baxter L."/>
            <person name="Beisel K.W."/>
            <person name="Bersano T."/>
            <person name="Bono H."/>
            <person name="Chalk A.M."/>
            <person name="Chiu K.P."/>
            <person name="Choudhary V."/>
            <person name="Christoffels A."/>
            <person name="Clutterbuck D.R."/>
            <person name="Crowe M.L."/>
            <person name="Dalla E."/>
            <person name="Dalrymple B.P."/>
            <person name="de Bono B."/>
            <person name="Della Gatta G."/>
            <person name="di Bernardo D."/>
            <person name="Down T."/>
            <person name="Engstrom P."/>
            <person name="Fagiolini M."/>
            <person name="Faulkner G."/>
            <person name="Fletcher C.F."/>
            <person name="Fukushima T."/>
            <person name="Furuno M."/>
            <person name="Futaki S."/>
            <person name="Gariboldi M."/>
            <person name="Georgii-Hemming P."/>
            <person name="Gingeras T.R."/>
            <person name="Gojobori T."/>
            <person name="Green R.E."/>
            <person name="Gustincich S."/>
            <person name="Harbers M."/>
            <person name="Hayashi Y."/>
            <person name="Hensch T.K."/>
            <person name="Hirokawa N."/>
            <person name="Hill D."/>
            <person name="Huminiecki L."/>
            <person name="Iacono M."/>
            <person name="Ikeo K."/>
            <person name="Iwama A."/>
            <person name="Ishikawa T."/>
            <person name="Jakt M."/>
            <person name="Kanapin A."/>
            <person name="Katoh M."/>
            <person name="Kawasawa Y."/>
            <person name="Kelso J."/>
            <person name="Kitamura H."/>
            <person name="Kitano H."/>
            <person name="Kollias G."/>
            <person name="Krishnan S.P."/>
            <person name="Kruger A."/>
            <person name="Kummerfeld S.K."/>
            <person name="Kurochkin I.V."/>
            <person name="Lareau L.F."/>
            <person name="Lazarevic D."/>
            <person name="Lipovich L."/>
            <person name="Liu J."/>
            <person name="Liuni S."/>
            <person name="McWilliam S."/>
            <person name="Madan Babu M."/>
            <person name="Madera M."/>
            <person name="Marchionni L."/>
            <person name="Matsuda H."/>
            <person name="Matsuzawa S."/>
            <person name="Miki H."/>
            <person name="Mignone F."/>
            <person name="Miyake S."/>
            <person name="Morris K."/>
            <person name="Mottagui-Tabar S."/>
            <person name="Mulder N."/>
            <person name="Nakano N."/>
            <person name="Nakauchi H."/>
            <person name="Ng P."/>
            <person name="Nilsson R."/>
            <person name="Nishiguchi S."/>
            <person name="Nishikawa S."/>
            <person name="Nori F."/>
            <person name="Ohara O."/>
            <person name="Okazaki Y."/>
            <person name="Orlando V."/>
            <person name="Pang K.C."/>
            <person name="Pavan W.J."/>
            <person name="Pavesi G."/>
            <person name="Pesole G."/>
            <person name="Petrovsky N."/>
            <person name="Piazza S."/>
            <person name="Reed J."/>
            <person name="Reid J.F."/>
            <person name="Ring B.Z."/>
            <person name="Ringwald M."/>
            <person name="Rost B."/>
            <person name="Ruan Y."/>
            <person name="Salzberg S.L."/>
            <person name="Sandelin A."/>
            <person name="Schneider C."/>
            <person name="Schoenbach C."/>
            <person name="Sekiguchi K."/>
            <person name="Semple C.A."/>
            <person name="Seno S."/>
            <person name="Sessa L."/>
            <person name="Sheng Y."/>
            <person name="Shibata Y."/>
            <person name="Shimada H."/>
            <person name="Shimada K."/>
            <person name="Silva D."/>
            <person name="Sinclair B."/>
            <person name="Sperling S."/>
            <person name="Stupka E."/>
            <person name="Sugiura K."/>
            <person name="Sultana R."/>
            <person name="Takenaka Y."/>
            <person name="Taki K."/>
            <person name="Tammoja K."/>
            <person name="Tan S.L."/>
            <person name="Tang S."/>
            <person name="Taylor M.S."/>
            <person name="Tegner J."/>
            <person name="Teichmann S.A."/>
            <person name="Ueda H.R."/>
            <person name="van Nimwegen E."/>
            <person name="Verardo R."/>
            <person name="Wei C.L."/>
            <person name="Yagi K."/>
            <person name="Yamanishi H."/>
            <person name="Zabarovsky E."/>
            <person name="Zhu S."/>
            <person name="Zimmer A."/>
            <person name="Hide W."/>
            <person name="Bult C."/>
            <person name="Grimmond S.M."/>
            <person name="Teasdale R.D."/>
            <person name="Liu E.T."/>
            <person name="Brusic V."/>
            <person name="Quackenbush J."/>
            <person name="Wahlestedt C."/>
            <person name="Mattick J.S."/>
            <person name="Hume D.A."/>
            <person name="Kai C."/>
            <person name="Sasaki D."/>
            <person name="Tomaru Y."/>
            <person name="Fukuda S."/>
            <person name="Kanamori-Katayama M."/>
            <person name="Suzuki M."/>
            <person name="Aoki J."/>
            <person name="Arakawa T."/>
            <person name="Iida J."/>
            <person name="Imamura K."/>
            <person name="Itoh M."/>
            <person name="Kato T."/>
            <person name="Kawaji H."/>
            <person name="Kawagashira N."/>
            <person name="Kawashima T."/>
            <person name="Kojima M."/>
            <person name="Kondo S."/>
            <person name="Konno H."/>
            <person name="Nakano K."/>
            <person name="Ninomiya N."/>
            <person name="Nishio T."/>
            <person name="Okada M."/>
            <person name="Plessy C."/>
            <person name="Shibata K."/>
            <person name="Shiraki T."/>
            <person name="Suzuki S."/>
            <person name="Tagami M."/>
            <person name="Waki K."/>
            <person name="Watahiki A."/>
            <person name="Okamura-Oho Y."/>
            <person name="Suzuki H."/>
            <person name="Kawai J."/>
            <person name="Hayashizaki Y."/>
        </authorList>
    </citation>
    <scope>NUCLEOTIDE SEQUENCE [LARGE SCALE MRNA]</scope>
    <source>
        <strain>NOD</strain>
    </source>
</reference>
<reference key="2">
    <citation type="journal article" date="2004" name="Genome Res.">
        <title>The status, quality, and expansion of the NIH full-length cDNA project: the Mammalian Gene Collection (MGC).</title>
        <authorList>
            <consortium name="The MGC Project Team"/>
        </authorList>
    </citation>
    <scope>NUCLEOTIDE SEQUENCE [LARGE SCALE MRNA]</scope>
    <source>
        <tissue>Brain</tissue>
    </source>
</reference>
<reference key="3">
    <citation type="journal article" date="2010" name="Cell">
        <title>A tissue-specific atlas of mouse protein phosphorylation and expression.</title>
        <authorList>
            <person name="Huttlin E.L."/>
            <person name="Jedrychowski M.P."/>
            <person name="Elias J.E."/>
            <person name="Goswami T."/>
            <person name="Rad R."/>
            <person name="Beausoleil S.A."/>
            <person name="Villen J."/>
            <person name="Haas W."/>
            <person name="Sowa M.E."/>
            <person name="Gygi S.P."/>
        </authorList>
    </citation>
    <scope>IDENTIFICATION BY MASS SPECTROMETRY [LARGE SCALE ANALYSIS]</scope>
    <source>
        <tissue>Heart</tissue>
        <tissue>Liver</tissue>
        <tissue>Lung</tissue>
    </source>
</reference>